<dbReference type="EC" id="2.4.1.227" evidence="1"/>
<dbReference type="EMBL" id="CP000109">
    <property type="protein sequence ID" value="ABB41164.1"/>
    <property type="molecule type" value="Genomic_DNA"/>
</dbReference>
<dbReference type="SMR" id="Q31I59"/>
<dbReference type="STRING" id="317025.Tcr_0568"/>
<dbReference type="CAZy" id="GT28">
    <property type="family name" value="Glycosyltransferase Family 28"/>
</dbReference>
<dbReference type="KEGG" id="tcx:Tcr_0568"/>
<dbReference type="eggNOG" id="COG0707">
    <property type="taxonomic scope" value="Bacteria"/>
</dbReference>
<dbReference type="HOGENOM" id="CLU_037404_2_0_6"/>
<dbReference type="OrthoDB" id="9808936at2"/>
<dbReference type="UniPathway" id="UPA00219"/>
<dbReference type="GO" id="GO:0005886">
    <property type="term" value="C:plasma membrane"/>
    <property type="evidence" value="ECO:0007669"/>
    <property type="project" value="UniProtKB-SubCell"/>
</dbReference>
<dbReference type="GO" id="GO:0051991">
    <property type="term" value="F:UDP-N-acetyl-D-glucosamine:N-acetylmuramoyl-L-alanyl-D-glutamyl-meso-2,6-diaminopimelyl-D-alanyl-D-alanine-diphosphoundecaprenol 4-beta-N-acetylglucosaminlytransferase activity"/>
    <property type="evidence" value="ECO:0007669"/>
    <property type="project" value="RHEA"/>
</dbReference>
<dbReference type="GO" id="GO:0050511">
    <property type="term" value="F:undecaprenyldiphospho-muramoylpentapeptide beta-N-acetylglucosaminyltransferase activity"/>
    <property type="evidence" value="ECO:0007669"/>
    <property type="project" value="UniProtKB-UniRule"/>
</dbReference>
<dbReference type="GO" id="GO:0005975">
    <property type="term" value="P:carbohydrate metabolic process"/>
    <property type="evidence" value="ECO:0007669"/>
    <property type="project" value="InterPro"/>
</dbReference>
<dbReference type="GO" id="GO:0051301">
    <property type="term" value="P:cell division"/>
    <property type="evidence" value="ECO:0007669"/>
    <property type="project" value="UniProtKB-KW"/>
</dbReference>
<dbReference type="GO" id="GO:0071555">
    <property type="term" value="P:cell wall organization"/>
    <property type="evidence" value="ECO:0007669"/>
    <property type="project" value="UniProtKB-KW"/>
</dbReference>
<dbReference type="GO" id="GO:0030259">
    <property type="term" value="P:lipid glycosylation"/>
    <property type="evidence" value="ECO:0007669"/>
    <property type="project" value="UniProtKB-UniRule"/>
</dbReference>
<dbReference type="GO" id="GO:0009252">
    <property type="term" value="P:peptidoglycan biosynthetic process"/>
    <property type="evidence" value="ECO:0007669"/>
    <property type="project" value="UniProtKB-UniRule"/>
</dbReference>
<dbReference type="GO" id="GO:0008360">
    <property type="term" value="P:regulation of cell shape"/>
    <property type="evidence" value="ECO:0007669"/>
    <property type="project" value="UniProtKB-KW"/>
</dbReference>
<dbReference type="CDD" id="cd03785">
    <property type="entry name" value="GT28_MurG"/>
    <property type="match status" value="1"/>
</dbReference>
<dbReference type="Gene3D" id="3.40.50.2000">
    <property type="entry name" value="Glycogen Phosphorylase B"/>
    <property type="match status" value="2"/>
</dbReference>
<dbReference type="HAMAP" id="MF_00033">
    <property type="entry name" value="MurG"/>
    <property type="match status" value="1"/>
</dbReference>
<dbReference type="InterPro" id="IPR006009">
    <property type="entry name" value="GlcNAc_MurG"/>
</dbReference>
<dbReference type="InterPro" id="IPR007235">
    <property type="entry name" value="Glyco_trans_28_C"/>
</dbReference>
<dbReference type="InterPro" id="IPR004276">
    <property type="entry name" value="GlycoTrans_28_N"/>
</dbReference>
<dbReference type="NCBIfam" id="TIGR01133">
    <property type="entry name" value="murG"/>
    <property type="match status" value="1"/>
</dbReference>
<dbReference type="PANTHER" id="PTHR21015:SF22">
    <property type="entry name" value="GLYCOSYLTRANSFERASE"/>
    <property type="match status" value="1"/>
</dbReference>
<dbReference type="PANTHER" id="PTHR21015">
    <property type="entry name" value="UDP-N-ACETYLGLUCOSAMINE--N-ACETYLMURAMYL-(PENTAPEPTIDE) PYROPHOSPHORYL-UNDECAPRENOL N-ACETYLGLUCOSAMINE TRANSFERASE 1"/>
    <property type="match status" value="1"/>
</dbReference>
<dbReference type="Pfam" id="PF04101">
    <property type="entry name" value="Glyco_tran_28_C"/>
    <property type="match status" value="1"/>
</dbReference>
<dbReference type="Pfam" id="PF03033">
    <property type="entry name" value="Glyco_transf_28"/>
    <property type="match status" value="1"/>
</dbReference>
<dbReference type="SUPFAM" id="SSF53756">
    <property type="entry name" value="UDP-Glycosyltransferase/glycogen phosphorylase"/>
    <property type="match status" value="1"/>
</dbReference>
<proteinExistence type="inferred from homology"/>
<accession>Q31I59</accession>
<comment type="function">
    <text evidence="1">Cell wall formation. Catalyzes the transfer of a GlcNAc subunit on undecaprenyl-pyrophosphoryl-MurNAc-pentapeptide (lipid intermediate I) to form undecaprenyl-pyrophosphoryl-MurNAc-(pentapeptide)GlcNAc (lipid intermediate II).</text>
</comment>
<comment type="catalytic activity">
    <reaction evidence="1">
        <text>di-trans,octa-cis-undecaprenyl diphospho-N-acetyl-alpha-D-muramoyl-L-alanyl-D-glutamyl-meso-2,6-diaminopimeloyl-D-alanyl-D-alanine + UDP-N-acetyl-alpha-D-glucosamine = di-trans,octa-cis-undecaprenyl diphospho-[N-acetyl-alpha-D-glucosaminyl-(1-&gt;4)]-N-acetyl-alpha-D-muramoyl-L-alanyl-D-glutamyl-meso-2,6-diaminopimeloyl-D-alanyl-D-alanine + UDP + H(+)</text>
        <dbReference type="Rhea" id="RHEA:31227"/>
        <dbReference type="ChEBI" id="CHEBI:15378"/>
        <dbReference type="ChEBI" id="CHEBI:57705"/>
        <dbReference type="ChEBI" id="CHEBI:58223"/>
        <dbReference type="ChEBI" id="CHEBI:61387"/>
        <dbReference type="ChEBI" id="CHEBI:61388"/>
        <dbReference type="EC" id="2.4.1.227"/>
    </reaction>
</comment>
<comment type="pathway">
    <text evidence="1">Cell wall biogenesis; peptidoglycan biosynthesis.</text>
</comment>
<comment type="subcellular location">
    <subcellularLocation>
        <location evidence="1">Cell inner membrane</location>
        <topology evidence="1">Peripheral membrane protein</topology>
        <orientation evidence="1">Cytoplasmic side</orientation>
    </subcellularLocation>
</comment>
<comment type="similarity">
    <text evidence="1">Belongs to the glycosyltransferase 28 family. MurG subfamily.</text>
</comment>
<gene>
    <name evidence="1" type="primary">murG</name>
    <name type="ordered locus">Tcr_0568</name>
</gene>
<evidence type="ECO:0000255" key="1">
    <source>
        <dbReference type="HAMAP-Rule" id="MF_00033"/>
    </source>
</evidence>
<reference key="1">
    <citation type="journal article" date="2006" name="PLoS Biol.">
        <title>The genome of deep-sea vent chemolithoautotroph Thiomicrospira crunogena XCL-2.</title>
        <authorList>
            <person name="Scott K.M."/>
            <person name="Sievert S.M."/>
            <person name="Abril F.N."/>
            <person name="Ball L.A."/>
            <person name="Barrett C.J."/>
            <person name="Blake R.A."/>
            <person name="Boller A.J."/>
            <person name="Chain P.S.G."/>
            <person name="Clark J.A."/>
            <person name="Davis C.R."/>
            <person name="Detter C."/>
            <person name="Do K.F."/>
            <person name="Dobrinski K.P."/>
            <person name="Faza B.I."/>
            <person name="Fitzpatrick K.A."/>
            <person name="Freyermuth S.K."/>
            <person name="Harmer T.L."/>
            <person name="Hauser L.J."/>
            <person name="Huegler M."/>
            <person name="Kerfeld C.A."/>
            <person name="Klotz M.G."/>
            <person name="Kong W.W."/>
            <person name="Land M."/>
            <person name="Lapidus A."/>
            <person name="Larimer F.W."/>
            <person name="Longo D.L."/>
            <person name="Lucas S."/>
            <person name="Malfatti S.A."/>
            <person name="Massey S.E."/>
            <person name="Martin D.D."/>
            <person name="McCuddin Z."/>
            <person name="Meyer F."/>
            <person name="Moore J.L."/>
            <person name="Ocampo L.H. Jr."/>
            <person name="Paul J.H."/>
            <person name="Paulsen I.T."/>
            <person name="Reep D.K."/>
            <person name="Ren Q."/>
            <person name="Ross R.L."/>
            <person name="Sato P.Y."/>
            <person name="Thomas P."/>
            <person name="Tinkham L.E."/>
            <person name="Zeruth G.T."/>
        </authorList>
    </citation>
    <scope>NUCLEOTIDE SEQUENCE [LARGE SCALE GENOMIC DNA]</scope>
    <source>
        <strain>DSM 25203 / XCL-2</strain>
    </source>
</reference>
<name>MURG_HYDCU</name>
<protein>
    <recommendedName>
        <fullName evidence="1">UDP-N-acetylglucosamine--N-acetylmuramyl-(pentapeptide) pyrophosphoryl-undecaprenol N-acetylglucosamine transferase</fullName>
        <ecNumber evidence="1">2.4.1.227</ecNumber>
    </recommendedName>
    <alternativeName>
        <fullName evidence="1">Undecaprenyl-PP-MurNAc-pentapeptide-UDPGlcNAc GlcNAc transferase</fullName>
    </alternativeName>
</protein>
<feature type="chain" id="PRO_1000002700" description="UDP-N-acetylglucosamine--N-acetylmuramyl-(pentapeptide) pyrophosphoryl-undecaprenol N-acetylglucosamine transferase">
    <location>
        <begin position="1"/>
        <end position="355"/>
    </location>
</feature>
<feature type="binding site" evidence="1">
    <location>
        <begin position="11"/>
        <end position="13"/>
    </location>
    <ligand>
        <name>UDP-N-acetyl-alpha-D-glucosamine</name>
        <dbReference type="ChEBI" id="CHEBI:57705"/>
    </ligand>
</feature>
<feature type="binding site" evidence="1">
    <location>
        <position position="123"/>
    </location>
    <ligand>
        <name>UDP-N-acetyl-alpha-D-glucosamine</name>
        <dbReference type="ChEBI" id="CHEBI:57705"/>
    </ligand>
</feature>
<feature type="binding site" evidence="1">
    <location>
        <position position="162"/>
    </location>
    <ligand>
        <name>UDP-N-acetyl-alpha-D-glucosamine</name>
        <dbReference type="ChEBI" id="CHEBI:57705"/>
    </ligand>
</feature>
<feature type="binding site" evidence="1">
    <location>
        <position position="185"/>
    </location>
    <ligand>
        <name>UDP-N-acetyl-alpha-D-glucosamine</name>
        <dbReference type="ChEBI" id="CHEBI:57705"/>
    </ligand>
</feature>
<feature type="binding site" evidence="1">
    <location>
        <position position="239"/>
    </location>
    <ligand>
        <name>UDP-N-acetyl-alpha-D-glucosamine</name>
        <dbReference type="ChEBI" id="CHEBI:57705"/>
    </ligand>
</feature>
<feature type="binding site" evidence="1">
    <location>
        <begin position="258"/>
        <end position="263"/>
    </location>
    <ligand>
        <name>UDP-N-acetyl-alpha-D-glucosamine</name>
        <dbReference type="ChEBI" id="CHEBI:57705"/>
    </ligand>
</feature>
<feature type="binding site" evidence="1">
    <location>
        <position position="284"/>
    </location>
    <ligand>
        <name>UDP-N-acetyl-alpha-D-glucosamine</name>
        <dbReference type="ChEBI" id="CHEBI:57705"/>
    </ligand>
</feature>
<sequence>MKKILIMAGGTGGHVFPGLALAEALADKQVKTVWLGTCNGMEKQWVDAAKIPFYTIAISGLRGNGLLGWLKAPFNVFKAWRQARYIIQQEAPDLVLGMGGFVCGPGGLAALSLNKPLVLHEQNATPGLTNKLLAPFAKKVICAFPQSTIKGKQVTVIGNPVRSGLESLPVVKAHSPRHLLVLGGSRGALALNEMVPEALSLLPEEQRPQVIHQTGQKTLQQAMSSYEAANVAADVVPFIDDMVSAYQQADLVVCRSGALTVSELMAAARPAILVPFPYAVDDHQTANAQALVDLNGGEVLQQADMTSELLAERLQFWMADKRCETASRSIRESAPHSAKEKIVDELLTLCDSSVH</sequence>
<organism>
    <name type="scientific">Hydrogenovibrio crunogenus (strain DSM 25203 / XCL-2)</name>
    <name type="common">Thiomicrospira crunogena</name>
    <dbReference type="NCBI Taxonomy" id="317025"/>
    <lineage>
        <taxon>Bacteria</taxon>
        <taxon>Pseudomonadati</taxon>
        <taxon>Pseudomonadota</taxon>
        <taxon>Gammaproteobacteria</taxon>
        <taxon>Thiotrichales</taxon>
        <taxon>Piscirickettsiaceae</taxon>
        <taxon>Hydrogenovibrio</taxon>
    </lineage>
</organism>
<keyword id="KW-0131">Cell cycle</keyword>
<keyword id="KW-0132">Cell division</keyword>
<keyword id="KW-0997">Cell inner membrane</keyword>
<keyword id="KW-1003">Cell membrane</keyword>
<keyword id="KW-0133">Cell shape</keyword>
<keyword id="KW-0961">Cell wall biogenesis/degradation</keyword>
<keyword id="KW-0328">Glycosyltransferase</keyword>
<keyword id="KW-0472">Membrane</keyword>
<keyword id="KW-0573">Peptidoglycan synthesis</keyword>
<keyword id="KW-0808">Transferase</keyword>